<proteinExistence type="inferred from homology"/>
<comment type="function">
    <text evidence="1">IGPS catalyzes the conversion of PRFAR and glutamine to IGP, AICAR and glutamate. The HisF subunit catalyzes the cyclization activity that produces IGP and AICAR from PRFAR using the ammonia provided by the HisH subunit.</text>
</comment>
<comment type="catalytic activity">
    <reaction evidence="1">
        <text>5-[(5-phospho-1-deoxy-D-ribulos-1-ylimino)methylamino]-1-(5-phospho-beta-D-ribosyl)imidazole-4-carboxamide + L-glutamine = D-erythro-1-(imidazol-4-yl)glycerol 3-phosphate + 5-amino-1-(5-phospho-beta-D-ribosyl)imidazole-4-carboxamide + L-glutamate + H(+)</text>
        <dbReference type="Rhea" id="RHEA:24793"/>
        <dbReference type="ChEBI" id="CHEBI:15378"/>
        <dbReference type="ChEBI" id="CHEBI:29985"/>
        <dbReference type="ChEBI" id="CHEBI:58278"/>
        <dbReference type="ChEBI" id="CHEBI:58359"/>
        <dbReference type="ChEBI" id="CHEBI:58475"/>
        <dbReference type="ChEBI" id="CHEBI:58525"/>
        <dbReference type="EC" id="4.3.2.10"/>
    </reaction>
</comment>
<comment type="pathway">
    <text evidence="1">Amino-acid biosynthesis; L-histidine biosynthesis; L-histidine from 5-phospho-alpha-D-ribose 1-diphosphate: step 5/9.</text>
</comment>
<comment type="subunit">
    <text evidence="1">Heterodimer of HisH and HisF.</text>
</comment>
<comment type="subcellular location">
    <subcellularLocation>
        <location evidence="1">Cytoplasm</location>
    </subcellularLocation>
</comment>
<comment type="similarity">
    <text evidence="1">Belongs to the HisA/HisF family.</text>
</comment>
<feature type="chain" id="PRO_1000134953" description="Imidazole glycerol phosphate synthase subunit HisF">
    <location>
        <begin position="1"/>
        <end position="252"/>
    </location>
</feature>
<feature type="active site" evidence="1">
    <location>
        <position position="11"/>
    </location>
</feature>
<feature type="active site" evidence="1">
    <location>
        <position position="130"/>
    </location>
</feature>
<name>HIS6_ACIB5</name>
<sequence length="252" mass="27186">MLAKRIIPCLDVDNGRVVKGVQFLDIRDAGDPVEVARRYNEQGADEITFLDITATHHGRDTTYRTVERMAETVFVPLTVGGGVRKVEDIRALLNAGADKVSINSAAVFNPEFVQEASQHFGAQCIVVAIDAKKTGDNKWEIFTHGGRKPTGIDAIEWAVKMADYGAGELLITSMDADGTKAGYDIALMRAINDRVTIPTIASGGVGNLQHLADGILQGGADAVLAASIFHFGQYTIPEAKQYLAEQGIEMRL</sequence>
<protein>
    <recommendedName>
        <fullName evidence="1">Imidazole glycerol phosphate synthase subunit HisF</fullName>
        <ecNumber evidence="1">4.3.2.10</ecNumber>
    </recommendedName>
    <alternativeName>
        <fullName evidence="1">IGP synthase cyclase subunit</fullName>
    </alternativeName>
    <alternativeName>
        <fullName evidence="1">IGP synthase subunit HisF</fullName>
    </alternativeName>
    <alternativeName>
        <fullName evidence="1">ImGP synthase subunit HisF</fullName>
        <shortName evidence="1">IGPS subunit HisF</shortName>
    </alternativeName>
</protein>
<gene>
    <name evidence="1" type="primary">hisF</name>
    <name type="ordered locus">AB57_3693</name>
</gene>
<dbReference type="EC" id="4.3.2.10" evidence="1"/>
<dbReference type="EMBL" id="CP001182">
    <property type="protein sequence ID" value="ACJ43051.1"/>
    <property type="molecule type" value="Genomic_DNA"/>
</dbReference>
<dbReference type="RefSeq" id="WP_000880078.1">
    <property type="nucleotide sequence ID" value="NC_011586.2"/>
</dbReference>
<dbReference type="SMR" id="B7IBD7"/>
<dbReference type="GeneID" id="92895482"/>
<dbReference type="KEGG" id="abn:AB57_3693"/>
<dbReference type="HOGENOM" id="CLU_048577_4_0_6"/>
<dbReference type="UniPathway" id="UPA00031">
    <property type="reaction ID" value="UER00010"/>
</dbReference>
<dbReference type="Proteomes" id="UP000007094">
    <property type="component" value="Chromosome"/>
</dbReference>
<dbReference type="GO" id="GO:0005737">
    <property type="term" value="C:cytoplasm"/>
    <property type="evidence" value="ECO:0007669"/>
    <property type="project" value="UniProtKB-SubCell"/>
</dbReference>
<dbReference type="GO" id="GO:0000107">
    <property type="term" value="F:imidazoleglycerol-phosphate synthase activity"/>
    <property type="evidence" value="ECO:0007669"/>
    <property type="project" value="UniProtKB-UniRule"/>
</dbReference>
<dbReference type="GO" id="GO:0016829">
    <property type="term" value="F:lyase activity"/>
    <property type="evidence" value="ECO:0007669"/>
    <property type="project" value="UniProtKB-KW"/>
</dbReference>
<dbReference type="GO" id="GO:0000105">
    <property type="term" value="P:L-histidine biosynthetic process"/>
    <property type="evidence" value="ECO:0007669"/>
    <property type="project" value="UniProtKB-UniRule"/>
</dbReference>
<dbReference type="CDD" id="cd04731">
    <property type="entry name" value="HisF"/>
    <property type="match status" value="1"/>
</dbReference>
<dbReference type="FunFam" id="3.20.20.70:FF:000006">
    <property type="entry name" value="Imidazole glycerol phosphate synthase subunit HisF"/>
    <property type="match status" value="1"/>
</dbReference>
<dbReference type="Gene3D" id="3.20.20.70">
    <property type="entry name" value="Aldolase class I"/>
    <property type="match status" value="1"/>
</dbReference>
<dbReference type="HAMAP" id="MF_01013">
    <property type="entry name" value="HisF"/>
    <property type="match status" value="1"/>
</dbReference>
<dbReference type="InterPro" id="IPR013785">
    <property type="entry name" value="Aldolase_TIM"/>
</dbReference>
<dbReference type="InterPro" id="IPR006062">
    <property type="entry name" value="His_biosynth"/>
</dbReference>
<dbReference type="InterPro" id="IPR004651">
    <property type="entry name" value="HisF"/>
</dbReference>
<dbReference type="InterPro" id="IPR050064">
    <property type="entry name" value="IGPS_HisA/HisF"/>
</dbReference>
<dbReference type="InterPro" id="IPR011060">
    <property type="entry name" value="RibuloseP-bd_barrel"/>
</dbReference>
<dbReference type="NCBIfam" id="TIGR00735">
    <property type="entry name" value="hisF"/>
    <property type="match status" value="1"/>
</dbReference>
<dbReference type="PANTHER" id="PTHR21235:SF2">
    <property type="entry name" value="IMIDAZOLE GLYCEROL PHOSPHATE SYNTHASE HISHF"/>
    <property type="match status" value="1"/>
</dbReference>
<dbReference type="PANTHER" id="PTHR21235">
    <property type="entry name" value="IMIDAZOLE GLYCEROL PHOSPHATE SYNTHASE SUBUNIT HISF/H IGP SYNTHASE SUBUNIT HISF/H"/>
    <property type="match status" value="1"/>
</dbReference>
<dbReference type="Pfam" id="PF00977">
    <property type="entry name" value="His_biosynth"/>
    <property type="match status" value="1"/>
</dbReference>
<dbReference type="SUPFAM" id="SSF51366">
    <property type="entry name" value="Ribulose-phoshate binding barrel"/>
    <property type="match status" value="1"/>
</dbReference>
<keyword id="KW-0028">Amino-acid biosynthesis</keyword>
<keyword id="KW-0963">Cytoplasm</keyword>
<keyword id="KW-0368">Histidine biosynthesis</keyword>
<keyword id="KW-0456">Lyase</keyword>
<accession>B7IBD7</accession>
<evidence type="ECO:0000255" key="1">
    <source>
        <dbReference type="HAMAP-Rule" id="MF_01013"/>
    </source>
</evidence>
<organism>
    <name type="scientific">Acinetobacter baumannii (strain AB0057)</name>
    <dbReference type="NCBI Taxonomy" id="480119"/>
    <lineage>
        <taxon>Bacteria</taxon>
        <taxon>Pseudomonadati</taxon>
        <taxon>Pseudomonadota</taxon>
        <taxon>Gammaproteobacteria</taxon>
        <taxon>Moraxellales</taxon>
        <taxon>Moraxellaceae</taxon>
        <taxon>Acinetobacter</taxon>
        <taxon>Acinetobacter calcoaceticus/baumannii complex</taxon>
    </lineage>
</organism>
<reference key="1">
    <citation type="journal article" date="2008" name="J. Bacteriol.">
        <title>Comparative genome sequence analysis of multidrug-resistant Acinetobacter baumannii.</title>
        <authorList>
            <person name="Adams M.D."/>
            <person name="Goglin K."/>
            <person name="Molyneaux N."/>
            <person name="Hujer K.M."/>
            <person name="Lavender H."/>
            <person name="Jamison J.J."/>
            <person name="MacDonald I.J."/>
            <person name="Martin K.M."/>
            <person name="Russo T."/>
            <person name="Campagnari A.A."/>
            <person name="Hujer A.M."/>
            <person name="Bonomo R.A."/>
            <person name="Gill S.R."/>
        </authorList>
    </citation>
    <scope>NUCLEOTIDE SEQUENCE [LARGE SCALE GENOMIC DNA]</scope>
    <source>
        <strain>AB0057</strain>
    </source>
</reference>